<accession>Q884H4</accession>
<organism>
    <name type="scientific">Pseudomonas syringae pv. tomato (strain ATCC BAA-871 / DC3000)</name>
    <dbReference type="NCBI Taxonomy" id="223283"/>
    <lineage>
        <taxon>Bacteria</taxon>
        <taxon>Pseudomonadati</taxon>
        <taxon>Pseudomonadota</taxon>
        <taxon>Gammaproteobacteria</taxon>
        <taxon>Pseudomonadales</taxon>
        <taxon>Pseudomonadaceae</taxon>
        <taxon>Pseudomonas</taxon>
    </lineage>
</organism>
<sequence>MTSKLDQLKKFTTVVADTGDFGAIKSLKPQDATTNPSLLLKAASSESNDQMLADAFSGAKGDIGLACDRFAVAIGQEILKVVPGRVSTEVDARLSFDTDALIERSERIIGLYDTAGISRDRVLIKLAATWEGIRAAEKLEKDGIQTNLTLLFSFAQAVACAEAGVFLISPFVGRIYDWYKKSSGTDYVGADDPGVQSVTRIYNYYKANDFKTVVMGASFRNLNQIEQLAGCDRLTISTELLKQLAEDTGTLEQKLAPGNAGEARQSLTESQFRWASNEDAMATEKLAEGIRQFARDQEKLEALLSAKKS</sequence>
<feature type="chain" id="PRO_0000173609" description="Transaldolase">
    <location>
        <begin position="1"/>
        <end position="309"/>
    </location>
</feature>
<feature type="active site" description="Schiff-base intermediate with substrate" evidence="2">
    <location>
        <position position="125"/>
    </location>
</feature>
<keyword id="KW-0963">Cytoplasm</keyword>
<keyword id="KW-0570">Pentose shunt</keyword>
<keyword id="KW-1185">Reference proteome</keyword>
<keyword id="KW-0704">Schiff base</keyword>
<keyword id="KW-0808">Transferase</keyword>
<reference key="1">
    <citation type="journal article" date="2003" name="Proc. Natl. Acad. Sci. U.S.A.">
        <title>The complete genome sequence of the Arabidopsis and tomato pathogen Pseudomonas syringae pv. tomato DC3000.</title>
        <authorList>
            <person name="Buell C.R."/>
            <person name="Joardar V."/>
            <person name="Lindeberg M."/>
            <person name="Selengut J."/>
            <person name="Paulsen I.T."/>
            <person name="Gwinn M.L."/>
            <person name="Dodson R.J."/>
            <person name="DeBoy R.T."/>
            <person name="Durkin A.S."/>
            <person name="Kolonay J.F."/>
            <person name="Madupu R."/>
            <person name="Daugherty S.C."/>
            <person name="Brinkac L.M."/>
            <person name="Beanan M.J."/>
            <person name="Haft D.H."/>
            <person name="Nelson W.C."/>
            <person name="Davidsen T.M."/>
            <person name="Zafar N."/>
            <person name="Zhou L."/>
            <person name="Liu J."/>
            <person name="Yuan Q."/>
            <person name="Khouri H.M."/>
            <person name="Fedorova N.B."/>
            <person name="Tran B."/>
            <person name="Russell D."/>
            <person name="Berry K.J."/>
            <person name="Utterback T.R."/>
            <person name="Van Aken S.E."/>
            <person name="Feldblyum T.V."/>
            <person name="D'Ascenzo M."/>
            <person name="Deng W.-L."/>
            <person name="Ramos A.R."/>
            <person name="Alfano J.R."/>
            <person name="Cartinhour S."/>
            <person name="Chatterjee A.K."/>
            <person name="Delaney T.P."/>
            <person name="Lazarowitz S.G."/>
            <person name="Martin G.B."/>
            <person name="Schneider D.J."/>
            <person name="Tang X."/>
            <person name="Bender C.L."/>
            <person name="White O."/>
            <person name="Fraser C.M."/>
            <person name="Collmer A."/>
        </authorList>
    </citation>
    <scope>NUCLEOTIDE SEQUENCE [LARGE SCALE GENOMIC DNA]</scope>
    <source>
        <strain>ATCC BAA-871 / DC3000</strain>
    </source>
</reference>
<dbReference type="EC" id="2.2.1.2" evidence="2"/>
<dbReference type="EMBL" id="AE016853">
    <property type="protein sequence ID" value="AAO55636.1"/>
    <property type="molecule type" value="Genomic_DNA"/>
</dbReference>
<dbReference type="RefSeq" id="NP_791941.1">
    <property type="nucleotide sequence ID" value="NC_004578.1"/>
</dbReference>
<dbReference type="RefSeq" id="WP_005771350.1">
    <property type="nucleotide sequence ID" value="NC_004578.1"/>
</dbReference>
<dbReference type="SMR" id="Q884H4"/>
<dbReference type="STRING" id="223283.PSPTO_2119"/>
<dbReference type="GeneID" id="1183766"/>
<dbReference type="KEGG" id="pst:PSPTO_2119"/>
<dbReference type="PATRIC" id="fig|223283.9.peg.2150"/>
<dbReference type="eggNOG" id="COG0176">
    <property type="taxonomic scope" value="Bacteria"/>
</dbReference>
<dbReference type="HOGENOM" id="CLU_047470_0_1_6"/>
<dbReference type="OrthoDB" id="9809101at2"/>
<dbReference type="PhylomeDB" id="Q884H4"/>
<dbReference type="UniPathway" id="UPA00115">
    <property type="reaction ID" value="UER00414"/>
</dbReference>
<dbReference type="Proteomes" id="UP000002515">
    <property type="component" value="Chromosome"/>
</dbReference>
<dbReference type="GO" id="GO:0005829">
    <property type="term" value="C:cytosol"/>
    <property type="evidence" value="ECO:0007669"/>
    <property type="project" value="TreeGrafter"/>
</dbReference>
<dbReference type="GO" id="GO:0004801">
    <property type="term" value="F:transaldolase activity"/>
    <property type="evidence" value="ECO:0000250"/>
    <property type="project" value="UniProtKB"/>
</dbReference>
<dbReference type="GO" id="GO:0005975">
    <property type="term" value="P:carbohydrate metabolic process"/>
    <property type="evidence" value="ECO:0007669"/>
    <property type="project" value="InterPro"/>
</dbReference>
<dbReference type="GO" id="GO:0006098">
    <property type="term" value="P:pentose-phosphate shunt"/>
    <property type="evidence" value="ECO:0007669"/>
    <property type="project" value="UniProtKB-UniRule"/>
</dbReference>
<dbReference type="CDD" id="cd00957">
    <property type="entry name" value="Transaldolase_TalAB"/>
    <property type="match status" value="1"/>
</dbReference>
<dbReference type="FunFam" id="3.20.20.70:FF:000002">
    <property type="entry name" value="Transaldolase"/>
    <property type="match status" value="1"/>
</dbReference>
<dbReference type="Gene3D" id="3.20.20.70">
    <property type="entry name" value="Aldolase class I"/>
    <property type="match status" value="1"/>
</dbReference>
<dbReference type="HAMAP" id="MF_00492">
    <property type="entry name" value="Transaldolase_1"/>
    <property type="match status" value="1"/>
</dbReference>
<dbReference type="InterPro" id="IPR013785">
    <property type="entry name" value="Aldolase_TIM"/>
</dbReference>
<dbReference type="InterPro" id="IPR001585">
    <property type="entry name" value="TAL/FSA"/>
</dbReference>
<dbReference type="InterPro" id="IPR004730">
    <property type="entry name" value="Transaldolase_1"/>
</dbReference>
<dbReference type="InterPro" id="IPR018225">
    <property type="entry name" value="Transaldolase_AS"/>
</dbReference>
<dbReference type="NCBIfam" id="NF009001">
    <property type="entry name" value="PRK12346.1"/>
    <property type="match status" value="1"/>
</dbReference>
<dbReference type="NCBIfam" id="TIGR00874">
    <property type="entry name" value="talAB"/>
    <property type="match status" value="1"/>
</dbReference>
<dbReference type="PANTHER" id="PTHR10683">
    <property type="entry name" value="TRANSALDOLASE"/>
    <property type="match status" value="1"/>
</dbReference>
<dbReference type="PANTHER" id="PTHR10683:SF18">
    <property type="entry name" value="TRANSALDOLASE"/>
    <property type="match status" value="1"/>
</dbReference>
<dbReference type="Pfam" id="PF00923">
    <property type="entry name" value="TAL_FSA"/>
    <property type="match status" value="1"/>
</dbReference>
<dbReference type="SUPFAM" id="SSF51569">
    <property type="entry name" value="Aldolase"/>
    <property type="match status" value="1"/>
</dbReference>
<dbReference type="PROSITE" id="PS01054">
    <property type="entry name" value="TRANSALDOLASE_1"/>
    <property type="match status" value="1"/>
</dbReference>
<dbReference type="PROSITE" id="PS00958">
    <property type="entry name" value="TRANSALDOLASE_2"/>
    <property type="match status" value="1"/>
</dbReference>
<gene>
    <name evidence="2" type="primary">tal</name>
    <name type="ordered locus">PSPTO_2119</name>
</gene>
<protein>
    <recommendedName>
        <fullName evidence="2">Transaldolase</fullName>
        <ecNumber evidence="2">2.2.1.2</ecNumber>
    </recommendedName>
</protein>
<proteinExistence type="inferred from homology"/>
<comment type="function">
    <text evidence="2">Transaldolase is important for the balance of metabolites in the pentose-phosphate pathway.</text>
</comment>
<comment type="catalytic activity">
    <reaction evidence="2">
        <text>D-sedoheptulose 7-phosphate + D-glyceraldehyde 3-phosphate = D-erythrose 4-phosphate + beta-D-fructose 6-phosphate</text>
        <dbReference type="Rhea" id="RHEA:17053"/>
        <dbReference type="ChEBI" id="CHEBI:16897"/>
        <dbReference type="ChEBI" id="CHEBI:57483"/>
        <dbReference type="ChEBI" id="CHEBI:57634"/>
        <dbReference type="ChEBI" id="CHEBI:59776"/>
        <dbReference type="EC" id="2.2.1.2"/>
    </reaction>
</comment>
<comment type="pathway">
    <text evidence="2">Carbohydrate degradation; pentose phosphate pathway; D-glyceraldehyde 3-phosphate and beta-D-fructose 6-phosphate from D-ribose 5-phosphate and D-xylulose 5-phosphate (non-oxidative stage): step 2/3.</text>
</comment>
<comment type="subunit">
    <text evidence="1">Homodimer.</text>
</comment>
<comment type="subcellular location">
    <subcellularLocation>
        <location evidence="2">Cytoplasm</location>
    </subcellularLocation>
</comment>
<comment type="similarity">
    <text evidence="2">Belongs to the transaldolase family. Type 1 subfamily.</text>
</comment>
<evidence type="ECO:0000250" key="1"/>
<evidence type="ECO:0000255" key="2">
    <source>
        <dbReference type="HAMAP-Rule" id="MF_00492"/>
    </source>
</evidence>
<name>TAL_PSESM</name>